<keyword id="KW-0997">Cell inner membrane</keyword>
<keyword id="KW-1003">Cell membrane</keyword>
<keyword id="KW-0407">Ion channel</keyword>
<keyword id="KW-0406">Ion transport</keyword>
<keyword id="KW-0472">Membrane</keyword>
<keyword id="KW-1185">Reference proteome</keyword>
<keyword id="KW-0812">Transmembrane</keyword>
<keyword id="KW-1133">Transmembrane helix</keyword>
<keyword id="KW-0813">Transport</keyword>
<name>MSCL_PARDP</name>
<reference key="1">
    <citation type="submission" date="2006-12" db="EMBL/GenBank/DDBJ databases">
        <title>Complete sequence of chromosome 1 of Paracoccus denitrificans PD1222.</title>
        <authorList>
            <person name="Copeland A."/>
            <person name="Lucas S."/>
            <person name="Lapidus A."/>
            <person name="Barry K."/>
            <person name="Detter J.C."/>
            <person name="Glavina del Rio T."/>
            <person name="Hammon N."/>
            <person name="Israni S."/>
            <person name="Dalin E."/>
            <person name="Tice H."/>
            <person name="Pitluck S."/>
            <person name="Munk A.C."/>
            <person name="Brettin T."/>
            <person name="Bruce D."/>
            <person name="Han C."/>
            <person name="Tapia R."/>
            <person name="Gilna P."/>
            <person name="Schmutz J."/>
            <person name="Larimer F."/>
            <person name="Land M."/>
            <person name="Hauser L."/>
            <person name="Kyrpides N."/>
            <person name="Lykidis A."/>
            <person name="Spiro S."/>
            <person name="Richardson D.J."/>
            <person name="Moir J.W.B."/>
            <person name="Ferguson S.J."/>
            <person name="van Spanning R.J.M."/>
            <person name="Richardson P."/>
        </authorList>
    </citation>
    <scope>NUCLEOTIDE SEQUENCE [LARGE SCALE GENOMIC DNA]</scope>
    <source>
        <strain>Pd 1222</strain>
    </source>
</reference>
<evidence type="ECO:0000255" key="1">
    <source>
        <dbReference type="HAMAP-Rule" id="MF_00115"/>
    </source>
</evidence>
<sequence length="145" mass="15432">MFKEFKEFIARGNVIDLAVGIIIGAAFTAIVNSLVADLINPIIGLLTGGTDFSGHYLVLKGEVPPGASLQVARDSGASVFAYGAFLSAVINFLIIAWAVFLLVKAVNRVQSAASRQKEAEAEAAAGPTQEELLTEIRDELRARRT</sequence>
<organism>
    <name type="scientific">Paracoccus denitrificans (strain Pd 1222)</name>
    <dbReference type="NCBI Taxonomy" id="318586"/>
    <lineage>
        <taxon>Bacteria</taxon>
        <taxon>Pseudomonadati</taxon>
        <taxon>Pseudomonadota</taxon>
        <taxon>Alphaproteobacteria</taxon>
        <taxon>Rhodobacterales</taxon>
        <taxon>Paracoccaceae</taxon>
        <taxon>Paracoccus</taxon>
    </lineage>
</organism>
<protein>
    <recommendedName>
        <fullName evidence="1">Large-conductance mechanosensitive channel</fullName>
    </recommendedName>
</protein>
<dbReference type="EMBL" id="CP000489">
    <property type="protein sequence ID" value="ABL70357.1"/>
    <property type="molecule type" value="Genomic_DNA"/>
</dbReference>
<dbReference type="RefSeq" id="WP_011748551.1">
    <property type="nucleotide sequence ID" value="NC_008686.1"/>
</dbReference>
<dbReference type="SMR" id="A1B4B3"/>
<dbReference type="STRING" id="318586.Pden_2265"/>
<dbReference type="EnsemblBacteria" id="ABL70357">
    <property type="protein sequence ID" value="ABL70357"/>
    <property type="gene ID" value="Pden_2265"/>
</dbReference>
<dbReference type="GeneID" id="93450664"/>
<dbReference type="KEGG" id="pde:Pden_2265"/>
<dbReference type="eggNOG" id="COG1970">
    <property type="taxonomic scope" value="Bacteria"/>
</dbReference>
<dbReference type="HOGENOM" id="CLU_095787_0_1_5"/>
<dbReference type="OrthoDB" id="9810350at2"/>
<dbReference type="Proteomes" id="UP000000361">
    <property type="component" value="Chromosome 1"/>
</dbReference>
<dbReference type="GO" id="GO:0005886">
    <property type="term" value="C:plasma membrane"/>
    <property type="evidence" value="ECO:0007669"/>
    <property type="project" value="UniProtKB-SubCell"/>
</dbReference>
<dbReference type="GO" id="GO:0008381">
    <property type="term" value="F:mechanosensitive monoatomic ion channel activity"/>
    <property type="evidence" value="ECO:0007669"/>
    <property type="project" value="UniProtKB-UniRule"/>
</dbReference>
<dbReference type="Gene3D" id="1.10.1200.120">
    <property type="entry name" value="Large-conductance mechanosensitive channel, MscL, domain 1"/>
    <property type="match status" value="1"/>
</dbReference>
<dbReference type="HAMAP" id="MF_00115">
    <property type="entry name" value="MscL"/>
    <property type="match status" value="1"/>
</dbReference>
<dbReference type="InterPro" id="IPR019823">
    <property type="entry name" value="Mechanosensitive_channel_CS"/>
</dbReference>
<dbReference type="InterPro" id="IPR001185">
    <property type="entry name" value="MS_channel"/>
</dbReference>
<dbReference type="InterPro" id="IPR037673">
    <property type="entry name" value="MSC/AndL"/>
</dbReference>
<dbReference type="InterPro" id="IPR036019">
    <property type="entry name" value="MscL_channel"/>
</dbReference>
<dbReference type="NCBIfam" id="TIGR00220">
    <property type="entry name" value="mscL"/>
    <property type="match status" value="1"/>
</dbReference>
<dbReference type="NCBIfam" id="NF001843">
    <property type="entry name" value="PRK00567.1-4"/>
    <property type="match status" value="1"/>
</dbReference>
<dbReference type="NCBIfam" id="NF010557">
    <property type="entry name" value="PRK13952.1"/>
    <property type="match status" value="1"/>
</dbReference>
<dbReference type="PANTHER" id="PTHR30266:SF2">
    <property type="entry name" value="LARGE-CONDUCTANCE MECHANOSENSITIVE CHANNEL"/>
    <property type="match status" value="1"/>
</dbReference>
<dbReference type="PANTHER" id="PTHR30266">
    <property type="entry name" value="MECHANOSENSITIVE CHANNEL MSCL"/>
    <property type="match status" value="1"/>
</dbReference>
<dbReference type="Pfam" id="PF01741">
    <property type="entry name" value="MscL"/>
    <property type="match status" value="1"/>
</dbReference>
<dbReference type="PRINTS" id="PR01264">
    <property type="entry name" value="MECHCHANNEL"/>
</dbReference>
<dbReference type="SUPFAM" id="SSF81330">
    <property type="entry name" value="Gated mechanosensitive channel"/>
    <property type="match status" value="1"/>
</dbReference>
<dbReference type="PROSITE" id="PS01327">
    <property type="entry name" value="MSCL"/>
    <property type="match status" value="1"/>
</dbReference>
<accession>A1B4B3</accession>
<proteinExistence type="inferred from homology"/>
<comment type="function">
    <text evidence="1">Channel that opens in response to stretch forces in the membrane lipid bilayer. May participate in the regulation of osmotic pressure changes within the cell.</text>
</comment>
<comment type="subunit">
    <text evidence="1">Homopentamer.</text>
</comment>
<comment type="subcellular location">
    <subcellularLocation>
        <location evidence="1">Cell inner membrane</location>
        <topology evidence="1">Multi-pass membrane protein</topology>
    </subcellularLocation>
</comment>
<comment type="similarity">
    <text evidence="1">Belongs to the MscL family.</text>
</comment>
<gene>
    <name evidence="1" type="primary">mscL</name>
    <name type="ordered locus">Pden_2265</name>
</gene>
<feature type="chain" id="PRO_1000015405" description="Large-conductance mechanosensitive channel">
    <location>
        <begin position="1"/>
        <end position="145"/>
    </location>
</feature>
<feature type="transmembrane region" description="Helical" evidence="1">
    <location>
        <begin position="14"/>
        <end position="34"/>
    </location>
</feature>
<feature type="transmembrane region" description="Helical" evidence="1">
    <location>
        <begin position="83"/>
        <end position="103"/>
    </location>
</feature>